<comment type="function">
    <text>Mnh complex is a Na(+)Li(+)/H(+) antiporter involved in Na(+) and/or Li(+) excretion and Na(+) resistance. Na(+)/H(+) antiport consumes a transmembrane electrical potential, and is thus inferred to be electrogenic. Does not transport K(+), Ca(2+) or Mg(2+).</text>
</comment>
<comment type="subunit">
    <text evidence="1">Forms a heterooligomeric complex that consists of seven subunits: MrpA, MrpB, MrpC, MrpD, MrpE, MrpF and MrpG.</text>
</comment>
<comment type="subcellular location">
    <subcellularLocation>
        <location evidence="3">Cell membrane</location>
        <topology evidence="3">Multi-pass membrane protein</topology>
    </subcellularLocation>
</comment>
<comment type="miscellaneous">
    <text>Mrp-dependent antiport apparently occurs by a secondary, proton motive force-dependent mechanism, but the similarity of several Mrp proteins to membrane-embedded subunits of energy-coupled NADH dehydrogenase complexes raises the possibility that there is a capacity for electron transport that could provide a primary energy coupling option for Mrp functions.</text>
</comment>
<comment type="similarity">
    <text evidence="3">Belongs to the CPA3 antiporters (TC 2.A.63) subunit G family.</text>
</comment>
<sequence length="119" mass="13108">MTAVEIIISIFVLIGGFLSLLGSIGIIRFPDVYGRLHAATKSATLGVISIMLATFLFFFLVHGEFVGKLLLTILFVFLTAPVAGMMMGRSAYRVGVPLWEKSTQDDLKKMYEKKMKGSN</sequence>
<protein>
    <recommendedName>
        <fullName>Na(+)/H(+) antiporter subunit G</fullName>
    </recommendedName>
    <alternativeName>
        <fullName>Mrp complex subunit G</fullName>
    </alternativeName>
    <alternativeName>
        <fullName>Multiple resistance and pH homeostasis protein G</fullName>
    </alternativeName>
</protein>
<feature type="chain" id="PRO_0000086863" description="Na(+)/H(+) antiporter subunit G">
    <location>
        <begin position="1"/>
        <end position="119"/>
    </location>
</feature>
<feature type="transmembrane region" description="Helical" evidence="2">
    <location>
        <begin position="7"/>
        <end position="29"/>
    </location>
</feature>
<feature type="transmembrane region" description="Helical" evidence="2">
    <location>
        <begin position="44"/>
        <end position="61"/>
    </location>
</feature>
<feature type="transmembrane region" description="Helical" evidence="2">
    <location>
        <begin position="66"/>
        <end position="88"/>
    </location>
</feature>
<feature type="helix" evidence="4">
    <location>
        <begin position="3"/>
        <end position="28"/>
    </location>
</feature>
<feature type="strand" evidence="4">
    <location>
        <begin position="29"/>
        <end position="31"/>
    </location>
</feature>
<feature type="helix" evidence="4">
    <location>
        <begin position="32"/>
        <end position="62"/>
    </location>
</feature>
<feature type="helix" evidence="4">
    <location>
        <begin position="67"/>
        <end position="94"/>
    </location>
</feature>
<feature type="helix" evidence="4">
    <location>
        <begin position="106"/>
        <end position="110"/>
    </location>
</feature>
<accession>Q9RGY9</accession>
<accession>D3FXH6</accession>
<reference key="1">
    <citation type="journal article" date="2001" name="FEBS Lett.">
        <title>Mrp-dependent Na(+)/H(+) antiporters of Bacillus exhibit characteristics that are unanticipated for completely secondary active transporters.</title>
        <authorList>
            <person name="Ito M."/>
            <person name="Guffanti A.A."/>
            <person name="Krulwich T.A."/>
        </authorList>
    </citation>
    <scope>NUCLEOTIDE SEQUENCE [GENOMIC DNA]</scope>
</reference>
<reference key="2">
    <citation type="journal article" date="2011" name="Environ. Microbiol.">
        <title>Genome of alkaliphilic Bacillus pseudofirmus OF4 reveals adaptations that support the ability to grow in an external pH range from 7.5 to 11.4.</title>
        <authorList>
            <person name="Janto B."/>
            <person name="Ahmed A."/>
            <person name="Ito M."/>
            <person name="Liu J."/>
            <person name="Hicks D.B."/>
            <person name="Pagni S."/>
            <person name="Fackelmayer O.J."/>
            <person name="Smith T.A."/>
            <person name="Earl J."/>
            <person name="Elbourne L.D."/>
            <person name="Hassan K."/>
            <person name="Paulsen I.T."/>
            <person name="Kolsto A.B."/>
            <person name="Tourasse N.J."/>
            <person name="Ehrlich G.D."/>
            <person name="Boissy R."/>
            <person name="Ivey D.M."/>
            <person name="Li G."/>
            <person name="Xue Y."/>
            <person name="Ma Y."/>
            <person name="Hu F.Z."/>
            <person name="Krulwich T.A."/>
        </authorList>
    </citation>
    <scope>NUCLEOTIDE SEQUENCE [LARGE SCALE GENOMIC DNA]</scope>
    <source>
        <strain>ATCC BAA-2126 / JCM 17055 / OF4</strain>
    </source>
</reference>
<reference key="3">
    <citation type="journal article" date="2007" name="J. Bacteriol.">
        <title>Catalytic properties of Staphylococcus aureus and Bacillus members of the secondary cation/proton antiporter-3 (Mrp) family are revealed by an optimized assay in an Escherichia coli host.</title>
        <authorList>
            <person name="Swartz T.H."/>
            <person name="Ito M."/>
            <person name="Ohira T."/>
            <person name="Natsui S."/>
            <person name="Hicks D.B."/>
            <person name="Krulwich T.A."/>
        </authorList>
    </citation>
    <scope>CHARACTERIZATION</scope>
    <scope>PROBABLE FUNCTION IN ELECTROGENIC ANTIPORTER ACTIVITY</scope>
</reference>
<proteinExistence type="evidence at protein level"/>
<name>MRPG_ALKPO</name>
<evidence type="ECO:0000250" key="1"/>
<evidence type="ECO:0000255" key="2"/>
<evidence type="ECO:0000305" key="3"/>
<evidence type="ECO:0007829" key="4">
    <source>
        <dbReference type="PDB" id="7QRU"/>
    </source>
</evidence>
<keyword id="KW-0002">3D-structure</keyword>
<keyword id="KW-0050">Antiport</keyword>
<keyword id="KW-1003">Cell membrane</keyword>
<keyword id="KW-0375">Hydrogen ion transport</keyword>
<keyword id="KW-0406">Ion transport</keyword>
<keyword id="KW-0472">Membrane</keyword>
<keyword id="KW-1185">Reference proteome</keyword>
<keyword id="KW-0915">Sodium</keyword>
<keyword id="KW-0739">Sodium transport</keyword>
<keyword id="KW-0812">Transmembrane</keyword>
<keyword id="KW-1133">Transmembrane helix</keyword>
<keyword id="KW-0813">Transport</keyword>
<organism>
    <name type="scientific">Alkalihalophilus pseudofirmus (strain ATCC BAA-2126 / JCM 17055 / OF4)</name>
    <name type="common">Bacillus pseudofirmus</name>
    <dbReference type="NCBI Taxonomy" id="398511"/>
    <lineage>
        <taxon>Bacteria</taxon>
        <taxon>Bacillati</taxon>
        <taxon>Bacillota</taxon>
        <taxon>Bacilli</taxon>
        <taxon>Bacillales</taxon>
        <taxon>Bacillaceae</taxon>
        <taxon>Alkalihalophilus</taxon>
    </lineage>
</organism>
<dbReference type="EMBL" id="AF097740">
    <property type="protein sequence ID" value="AAF21818.1"/>
    <property type="molecule type" value="Genomic_DNA"/>
</dbReference>
<dbReference type="EMBL" id="CP001878">
    <property type="protein sequence ID" value="ADC50687.1"/>
    <property type="molecule type" value="Genomic_DNA"/>
</dbReference>
<dbReference type="RefSeq" id="WP_012958050.1">
    <property type="nucleotide sequence ID" value="NC_013791.2"/>
</dbReference>
<dbReference type="PDB" id="7QRU">
    <property type="method" value="EM"/>
    <property type="resolution" value="2.24 A"/>
    <property type="chains" value="G=1-119"/>
</dbReference>
<dbReference type="PDBsum" id="7QRU"/>
<dbReference type="SMR" id="Q9RGY9"/>
<dbReference type="STRING" id="398511.BpOF4_13180"/>
<dbReference type="KEGG" id="bpf:BpOF4_13180"/>
<dbReference type="eggNOG" id="COG1320">
    <property type="taxonomic scope" value="Bacteria"/>
</dbReference>
<dbReference type="HOGENOM" id="CLU_121334_0_3_9"/>
<dbReference type="Proteomes" id="UP000001544">
    <property type="component" value="Chromosome"/>
</dbReference>
<dbReference type="GO" id="GO:0005886">
    <property type="term" value="C:plasma membrane"/>
    <property type="evidence" value="ECO:0007669"/>
    <property type="project" value="UniProtKB-SubCell"/>
</dbReference>
<dbReference type="GO" id="GO:0015385">
    <property type="term" value="F:sodium:proton antiporter activity"/>
    <property type="evidence" value="ECO:0007669"/>
    <property type="project" value="TreeGrafter"/>
</dbReference>
<dbReference type="InterPro" id="IPR005133">
    <property type="entry name" value="PhaG_MnhG_YufB"/>
</dbReference>
<dbReference type="NCBIfam" id="TIGR01300">
    <property type="entry name" value="CPA3_mnhG_phaG"/>
    <property type="match status" value="1"/>
</dbReference>
<dbReference type="NCBIfam" id="NF009314">
    <property type="entry name" value="PRK12674.1-2"/>
    <property type="match status" value="1"/>
</dbReference>
<dbReference type="PANTHER" id="PTHR34703">
    <property type="entry name" value="ANTIPORTER SUBUNIT MNHG2-RELATED"/>
    <property type="match status" value="1"/>
</dbReference>
<dbReference type="PANTHER" id="PTHR34703:SF1">
    <property type="entry name" value="ANTIPORTER SUBUNIT MNHG2-RELATED"/>
    <property type="match status" value="1"/>
</dbReference>
<dbReference type="Pfam" id="PF03334">
    <property type="entry name" value="PhaG_MnhG_YufB"/>
    <property type="match status" value="1"/>
</dbReference>
<gene>
    <name type="primary">mrpG</name>
    <name type="ordered locus">BpOF4_13180</name>
</gene>